<name>RXLRR_PHYIT</name>
<proteinExistence type="evidence at transcript level"/>
<keyword id="KW-1032">Host cell membrane</keyword>
<keyword id="KW-1035">Host cytoplasm</keyword>
<keyword id="KW-1043">Host membrane</keyword>
<keyword id="KW-1048">Host nucleus</keyword>
<keyword id="KW-0472">Membrane</keyword>
<keyword id="KW-1185">Reference proteome</keyword>
<keyword id="KW-0964">Secreted</keyword>
<keyword id="KW-0732">Signal</keyword>
<keyword id="KW-0843">Virulence</keyword>
<reference key="1">
    <citation type="journal article" date="2009" name="Nature">
        <title>Genome sequence and analysis of the Irish potato famine pathogen Phytophthora infestans.</title>
        <authorList>
            <consortium name="The Broad Institute Genome Sequencing Platform"/>
            <person name="Haas B.J."/>
            <person name="Kamoun S."/>
            <person name="Zody M.C."/>
            <person name="Jiang R.H."/>
            <person name="Handsaker R.E."/>
            <person name="Cano L.M."/>
            <person name="Grabherr M."/>
            <person name="Kodira C.D."/>
            <person name="Raffaele S."/>
            <person name="Torto-Alalibo T."/>
            <person name="Bozkurt T.O."/>
            <person name="Ah-Fong A.M."/>
            <person name="Alvarado L."/>
            <person name="Anderson V.L."/>
            <person name="Armstrong M.R."/>
            <person name="Avrova A."/>
            <person name="Baxter L."/>
            <person name="Beynon J."/>
            <person name="Boevink P.C."/>
            <person name="Bollmann S.R."/>
            <person name="Bos J.I."/>
            <person name="Bulone V."/>
            <person name="Cai G."/>
            <person name="Cakir C."/>
            <person name="Carrington J.C."/>
            <person name="Chawner M."/>
            <person name="Conti L."/>
            <person name="Costanzo S."/>
            <person name="Ewan R."/>
            <person name="Fahlgren N."/>
            <person name="Fischbach M.A."/>
            <person name="Fugelstad J."/>
            <person name="Gilroy E.M."/>
            <person name="Gnerre S."/>
            <person name="Green P.J."/>
            <person name="Grenville-Briggs L.J."/>
            <person name="Griffith J."/>
            <person name="Grunwald N.J."/>
            <person name="Horn K."/>
            <person name="Horner N.R."/>
            <person name="Hu C.H."/>
            <person name="Huitema E."/>
            <person name="Jeong D.H."/>
            <person name="Jones A.M."/>
            <person name="Jones J.D."/>
            <person name="Jones R.W."/>
            <person name="Karlsson E.K."/>
            <person name="Kunjeti S.G."/>
            <person name="Lamour K."/>
            <person name="Liu Z."/>
            <person name="Ma L."/>
            <person name="Maclean D."/>
            <person name="Chibucos M.C."/>
            <person name="McDonald H."/>
            <person name="McWalters J."/>
            <person name="Meijer H.J."/>
            <person name="Morgan W."/>
            <person name="Morris P.F."/>
            <person name="Munro C.A."/>
            <person name="O'Neill K."/>
            <person name="Ospina-Giraldo M."/>
            <person name="Pinzon A."/>
            <person name="Pritchard L."/>
            <person name="Ramsahoye B."/>
            <person name="Ren Q."/>
            <person name="Restrepo S."/>
            <person name="Roy S."/>
            <person name="Sadanandom A."/>
            <person name="Savidor A."/>
            <person name="Schornack S."/>
            <person name="Schwartz D.C."/>
            <person name="Schumann U.D."/>
            <person name="Schwessinger B."/>
            <person name="Seyer L."/>
            <person name="Sharpe T."/>
            <person name="Silvar C."/>
            <person name="Song J."/>
            <person name="Studholme D.J."/>
            <person name="Sykes S."/>
            <person name="Thines M."/>
            <person name="van de Vondervoort P.J."/>
            <person name="Phuntumart V."/>
            <person name="Wawra S."/>
            <person name="Weide R."/>
            <person name="Win J."/>
            <person name="Young C."/>
            <person name="Zhou S."/>
            <person name="Fry W."/>
            <person name="Meyers B.C."/>
            <person name="van West P."/>
            <person name="Ristaino J."/>
            <person name="Govers F."/>
            <person name="Birch P.R."/>
            <person name="Whisson S.C."/>
            <person name="Judelson H.S."/>
            <person name="Nusbaum C."/>
        </authorList>
    </citation>
    <scope>NUCLEOTIDE SEQUENCE [LARGE SCALE GENOMIC DNA]</scope>
    <source>
        <strain>T30-4</strain>
    </source>
</reference>
<reference key="2">
    <citation type="journal article" date="2017" name="Front. Plant Sci.">
        <title>Conserved RXLR effector genes of Phytophthora infestans expressed at the early stage of potato infection are suppressive to host defense.</title>
        <authorList>
            <person name="Yin J."/>
            <person name="Gu B."/>
            <person name="Huang G."/>
            <person name="Tian Y."/>
            <person name="Quan J."/>
            <person name="Lindqvist-Kreuze H."/>
            <person name="Shan W."/>
        </authorList>
    </citation>
    <scope>INDUCTION</scope>
    <scope>DOMAIN</scope>
</reference>
<reference key="3">
    <citation type="journal article" date="2019" name="J. Exp. Bot.">
        <title>Phytophthora infestans RXLR effectors act in concert at diverse subcellular locations to enhance host colonization.</title>
        <authorList>
            <person name="Wang S."/>
            <person name="McLellan H."/>
            <person name="Bukharova T."/>
            <person name="He Q."/>
            <person name="Murphy F."/>
            <person name="Shi J."/>
            <person name="Sun S."/>
            <person name="van Weymers P."/>
            <person name="Ren Y."/>
            <person name="Thilliez G."/>
            <person name="Wang H."/>
            <person name="Chen X."/>
            <person name="Engelhardt S."/>
            <person name="Vleeshouwers V."/>
            <person name="Gilroy E.M."/>
            <person name="Whisson S.C."/>
            <person name="Hein I."/>
            <person name="Wang X."/>
            <person name="Tian Z."/>
            <person name="Birch P.R.J."/>
            <person name="Boevink P.C."/>
        </authorList>
    </citation>
    <scope>FUNCTION</scope>
    <scope>SUBCELLULAR LOCATION</scope>
</reference>
<accession>D0NRQ7</accession>
<gene>
    <name type="ORF">PITG_15127</name>
</gene>
<dbReference type="EMBL" id="DS028155">
    <property type="protein sequence ID" value="EEY63407.1"/>
    <property type="molecule type" value="Genomic_DNA"/>
</dbReference>
<dbReference type="RefSeq" id="XP_002898292.1">
    <property type="nucleotide sequence ID" value="XM_002898246.2"/>
</dbReference>
<dbReference type="SMR" id="D0NRQ7"/>
<dbReference type="STRING" id="403677.D0NRQ7"/>
<dbReference type="EnsemblProtists" id="PITG_15127T0">
    <property type="protein sequence ID" value="PITG_15127T0"/>
    <property type="gene ID" value="PITG_15127"/>
</dbReference>
<dbReference type="GeneID" id="9476011"/>
<dbReference type="KEGG" id="pif:PITG_15127"/>
<dbReference type="VEuPathDB" id="FungiDB:PITG_15127"/>
<dbReference type="eggNOG" id="ENOG502RFKP">
    <property type="taxonomic scope" value="Eukaryota"/>
</dbReference>
<dbReference type="HOGENOM" id="CLU_021192_3_1_1"/>
<dbReference type="InParanoid" id="D0NRQ7"/>
<dbReference type="OrthoDB" id="112923at2759"/>
<dbReference type="Proteomes" id="UP000006643">
    <property type="component" value="Partially assembled WGS sequence"/>
</dbReference>
<dbReference type="GO" id="GO:0005576">
    <property type="term" value="C:extracellular region"/>
    <property type="evidence" value="ECO:0007669"/>
    <property type="project" value="UniProtKB-SubCell"/>
</dbReference>
<dbReference type="GO" id="GO:0030430">
    <property type="term" value="C:host cell cytoplasm"/>
    <property type="evidence" value="ECO:0007669"/>
    <property type="project" value="UniProtKB-SubCell"/>
</dbReference>
<dbReference type="GO" id="GO:0042025">
    <property type="term" value="C:host cell nucleus"/>
    <property type="evidence" value="ECO:0007669"/>
    <property type="project" value="UniProtKB-SubCell"/>
</dbReference>
<dbReference type="GO" id="GO:0020002">
    <property type="term" value="C:host cell plasma membrane"/>
    <property type="evidence" value="ECO:0007669"/>
    <property type="project" value="UniProtKB-SubCell"/>
</dbReference>
<dbReference type="GO" id="GO:0016020">
    <property type="term" value="C:membrane"/>
    <property type="evidence" value="ECO:0007669"/>
    <property type="project" value="UniProtKB-KW"/>
</dbReference>
<organism>
    <name type="scientific">Phytophthora infestans (strain T30-4)</name>
    <name type="common">Potato late blight agent</name>
    <dbReference type="NCBI Taxonomy" id="403677"/>
    <lineage>
        <taxon>Eukaryota</taxon>
        <taxon>Sar</taxon>
        <taxon>Stramenopiles</taxon>
        <taxon>Oomycota</taxon>
        <taxon>Peronosporales</taxon>
        <taxon>Peronosporaceae</taxon>
        <taxon>Phytophthora</taxon>
    </lineage>
</organism>
<protein>
    <recommendedName>
        <fullName evidence="4">RxLR effector protein PITG_15127</fullName>
    </recommendedName>
</protein>
<feature type="signal peptide" evidence="1">
    <location>
        <begin position="1"/>
        <end position="22"/>
    </location>
</feature>
<feature type="chain" id="PRO_5003012808" description="RxLR effector protein PITG_15127">
    <location>
        <begin position="23"/>
        <end position="516"/>
    </location>
</feature>
<feature type="short sequence motif" description="RxLR-dEER" evidence="6">
    <location>
        <begin position="48"/>
        <end position="63"/>
    </location>
</feature>
<comment type="function">
    <text evidence="3">Effector that enhances P.infestans colonization of Nicotiana benthamiana leaves.</text>
</comment>
<comment type="subcellular location">
    <subcellularLocation>
        <location evidence="3">Secreted</location>
    </subcellularLocation>
    <subcellularLocation>
        <location evidence="3">Host cell membrane</location>
    </subcellularLocation>
    <subcellularLocation>
        <location evidence="3">Host nucleus</location>
    </subcellularLocation>
    <subcellularLocation>
        <location evidence="3">Host cytoplasm</location>
    </subcellularLocation>
</comment>
<comment type="induction">
    <text evidence="2">Expression is induced during host plant infection.</text>
</comment>
<comment type="domain">
    <text evidence="6">The RxLR-dEER motif acts to carry the protein into the host cell cytoplasm through binding to cell surface phosphatidylinositol-3-phosphate.</text>
</comment>
<comment type="similarity">
    <text evidence="5">Belongs to the RxLR effector family.</text>
</comment>
<sequence>MRLYSGAILCTIATLLISVSTASKTTGSHLSTRLPLPIDKPENNSLPRFLRVSTQNTENGENRVISAGLEKLTDLAKAGVSNINLGSWISKDPPAEPILRRFKLTNGMDDALASPNLKALENYVKELNTQNNNNKASVIGMFMAHYGDDAVANALMTAQRAGGEMNTIQRLRNAQLLSWLQKRKSVDDVFTLLKLRSDGYLALASPKMEVLDDYIKLVISTKSTKDSLLKTLTKGFGGKEQLATILARAREDVKTRELALALQSALINKWVRVDLLRPKHIYKKLRLNRGLDALLDRNVHTFGAFISMYNAKNPNSKASLIDSFVAQYGNKAVATALTFAKPDDAATMNLVITLQRQQFLKWKEGGISANSVFRLLDIHFNDLLSPTNPKFDTLSGYLATLSNKNLLYNEGMLRAVSKGFGGEDELAIQTARAREHLIRNGYADLDEISIATEYQRMLFGRWFKRKTKPSDIYGTTFRSSENTASNLERATAARYKDYYKEHMAPPRIDTSINPRR</sequence>
<evidence type="ECO:0000255" key="1"/>
<evidence type="ECO:0000269" key="2">
    <source>
    </source>
</evidence>
<evidence type="ECO:0000269" key="3">
    <source>
    </source>
</evidence>
<evidence type="ECO:0000303" key="4">
    <source>
    </source>
</evidence>
<evidence type="ECO:0000305" key="5"/>
<evidence type="ECO:0000305" key="6">
    <source>
    </source>
</evidence>